<reference key="1">
    <citation type="journal article" date="2011" name="Nature">
        <title>The Medicago genome provides insight into the evolution of rhizobial symbioses.</title>
        <authorList>
            <person name="Young N.D."/>
            <person name="Debelle F."/>
            <person name="Oldroyd G.E.D."/>
            <person name="Geurts R."/>
            <person name="Cannon S.B."/>
            <person name="Udvardi M.K."/>
            <person name="Benedito V.A."/>
            <person name="Mayer K.F.X."/>
            <person name="Gouzy J."/>
            <person name="Schoof H."/>
            <person name="Van de Peer Y."/>
            <person name="Proost S."/>
            <person name="Cook D.R."/>
            <person name="Meyers B.C."/>
            <person name="Spannagl M."/>
            <person name="Cheung F."/>
            <person name="De Mita S."/>
            <person name="Krishnakumar V."/>
            <person name="Gundlach H."/>
            <person name="Zhou S."/>
            <person name="Mudge J."/>
            <person name="Bharti A.K."/>
            <person name="Murray J.D."/>
            <person name="Naoumkina M.A."/>
            <person name="Rosen B."/>
            <person name="Silverstein K.A.T."/>
            <person name="Tang H."/>
            <person name="Rombauts S."/>
            <person name="Zhao P.X."/>
            <person name="Zhou P."/>
            <person name="Barbe V."/>
            <person name="Bardou P."/>
            <person name="Bechner M."/>
            <person name="Bellec A."/>
            <person name="Berger A."/>
            <person name="Berges H."/>
            <person name="Bidwell S."/>
            <person name="Bisseling T."/>
            <person name="Choisne N."/>
            <person name="Couloux A."/>
            <person name="Denny R."/>
            <person name="Deshpande S."/>
            <person name="Dai X."/>
            <person name="Doyle J.J."/>
            <person name="Dudez A.-M."/>
            <person name="Farmer A.D."/>
            <person name="Fouteau S."/>
            <person name="Franken C."/>
            <person name="Gibelin C."/>
            <person name="Gish J."/>
            <person name="Goldstein S."/>
            <person name="Gonzalez A.J."/>
            <person name="Green P.J."/>
            <person name="Hallab A."/>
            <person name="Hartog M."/>
            <person name="Hua A."/>
            <person name="Humphray S.J."/>
            <person name="Jeong D.-H."/>
            <person name="Jing Y."/>
            <person name="Jocker A."/>
            <person name="Kenton S.M."/>
            <person name="Kim D.-J."/>
            <person name="Klee K."/>
            <person name="Lai H."/>
            <person name="Lang C."/>
            <person name="Lin S."/>
            <person name="Macmil S.L."/>
            <person name="Magdelenat G."/>
            <person name="Matthews L."/>
            <person name="McCorrison J."/>
            <person name="Monaghan E.L."/>
            <person name="Mun J.-H."/>
            <person name="Najar F.Z."/>
            <person name="Nicholson C."/>
            <person name="Noirot C."/>
            <person name="O'Bleness M."/>
            <person name="Paule C.R."/>
            <person name="Poulain J."/>
            <person name="Prion F."/>
            <person name="Qin B."/>
            <person name="Qu C."/>
            <person name="Retzel E.F."/>
            <person name="Riddle C."/>
            <person name="Sallet E."/>
            <person name="Samain S."/>
            <person name="Samson N."/>
            <person name="Sanders I."/>
            <person name="Saurat O."/>
            <person name="Scarpelli C."/>
            <person name="Schiex T."/>
            <person name="Segurens B."/>
            <person name="Severin A.J."/>
            <person name="Sherrier D.J."/>
            <person name="Shi R."/>
            <person name="Sims S."/>
            <person name="Singer S.R."/>
            <person name="Sinharoy S."/>
            <person name="Sterck L."/>
            <person name="Viollet A."/>
            <person name="Wang B.-B."/>
            <person name="Wang K."/>
            <person name="Wang M."/>
            <person name="Wang X."/>
            <person name="Warfsmann J."/>
            <person name="Weissenbach J."/>
            <person name="White D.D."/>
            <person name="White J.D."/>
            <person name="Wiley G.B."/>
            <person name="Wincker P."/>
            <person name="Xing Y."/>
            <person name="Yang L."/>
            <person name="Yao Z."/>
            <person name="Ying F."/>
            <person name="Zhai J."/>
            <person name="Zhou L."/>
            <person name="Zuber A."/>
            <person name="Denarie J."/>
            <person name="Dixon R.A."/>
            <person name="May G.D."/>
            <person name="Schwartz D.C."/>
            <person name="Rogers J."/>
            <person name="Quetier F."/>
            <person name="Town C.D."/>
            <person name="Roe B.A."/>
        </authorList>
    </citation>
    <scope>NUCLEOTIDE SEQUENCE [LARGE SCALE GENOMIC DNA]</scope>
    <source>
        <strain>cv. Jemalong A17</strain>
    </source>
</reference>
<reference key="2">
    <citation type="journal article" date="2014" name="BMC Genomics">
        <title>An improved genome release (version Mt4.0) for the model legume Medicago truncatula.</title>
        <authorList>
            <person name="Tang H."/>
            <person name="Krishnakumar V."/>
            <person name="Bidwell S."/>
            <person name="Rosen B."/>
            <person name="Chan A."/>
            <person name="Zhou S."/>
            <person name="Gentzbittel L."/>
            <person name="Childs K.L."/>
            <person name="Yandell M."/>
            <person name="Gundlach H."/>
            <person name="Mayer K.F."/>
            <person name="Schwartz D.C."/>
            <person name="Town C.D."/>
        </authorList>
    </citation>
    <scope>GENOME REANNOTATION</scope>
    <source>
        <strain>cv. Jemalong A17</strain>
    </source>
</reference>
<reference key="3">
    <citation type="journal article" date="2018" name="Nat. Plants">
        <title>Whole-genome landscape of Medicago truncatula symbiotic genes.</title>
        <authorList>
            <person name="Pecrix Y."/>
            <person name="Staton S.E."/>
            <person name="Sallet E."/>
            <person name="Lelandais-Briere C."/>
            <person name="Moreau S."/>
            <person name="Carrere S."/>
            <person name="Blein T."/>
            <person name="Jardinaud M.F."/>
            <person name="Latrasse D."/>
            <person name="Zouine M."/>
            <person name="Zahm M."/>
            <person name="Kreplak J."/>
            <person name="Mayjonade B."/>
            <person name="Satge C."/>
            <person name="Perez M."/>
            <person name="Cauet S."/>
            <person name="Marande W."/>
            <person name="Chantry-Darmon C."/>
            <person name="Lopez-Roques C."/>
            <person name="Bouchez O."/>
            <person name="Berard A."/>
            <person name="Debelle F."/>
            <person name="Munos S."/>
            <person name="Bendahmane A."/>
            <person name="Berges H."/>
            <person name="Niebel A."/>
            <person name="Buitink J."/>
            <person name="Frugier F."/>
            <person name="Benhamed M."/>
            <person name="Crespi M."/>
            <person name="Gouzy J."/>
            <person name="Gamas P."/>
        </authorList>
    </citation>
    <scope>NUCLEOTIDE SEQUENCE [LARGE SCALE GENOMIC DNA]</scope>
    <source>
        <strain>cv. Jemalong A17</strain>
    </source>
</reference>
<reference key="4">
    <citation type="journal article" date="2004" name="Plant Physiol.">
        <title>LIN, a Medicago truncatula gene required for nodule differentiation and persistence of rhizobial infections.</title>
        <authorList>
            <person name="Kuppusamy K.T."/>
            <person name="Endre G."/>
            <person name="Prabhu R."/>
            <person name="Penmetsa R.V."/>
            <person name="Veereshlingam H."/>
            <person name="Cook D.R."/>
            <person name="Dickstein R."/>
            <person name="Vandenbosch K.A."/>
        </authorList>
    </citation>
    <scope>INDUCTION DURING NODULATION</scope>
    <source>
        <strain>cv. Jemalong A17</strain>
    </source>
</reference>
<reference key="5">
    <citation type="journal article" date="2015" name="Int. Rev. Cell Mol. Biol.">
        <title>Leguminous plants: inventors of root nodules to accommodate symbiotic bacteria.</title>
        <authorList>
            <person name="Suzaki T."/>
            <person name="Yoro E."/>
            <person name="Kawaguchi M."/>
        </authorList>
    </citation>
    <scope>REVIEW ON NODULATION</scope>
</reference>
<reference key="6">
    <citation type="journal article" date="2020" name="Plant Cell">
        <title>Celebrating 20 years of genetic discoveries in legume nodulation and symbiotic nitrogen fixation.</title>
        <authorList>
            <person name="Roy S."/>
            <person name="Liu W."/>
            <person name="Nandety R.S."/>
            <person name="Crook A."/>
            <person name="Mysore K.S."/>
            <person name="Pislariu C.I."/>
            <person name="Frugoli J."/>
            <person name="Dickstein R."/>
            <person name="Udvardi M.K."/>
        </authorList>
    </citation>
    <scope>REVIEW ON NODULATION</scope>
</reference>
<evidence type="ECO:0000250" key="1">
    <source>
        <dbReference type="UniProtKB" id="P11728"/>
    </source>
</evidence>
<evidence type="ECO:0000255" key="2"/>
<evidence type="ECO:0000256" key="3">
    <source>
        <dbReference type="SAM" id="MobiDB-lite"/>
    </source>
</evidence>
<evidence type="ECO:0000269" key="4">
    <source>
    </source>
</evidence>
<evidence type="ECO:0000303" key="5">
    <source>
    </source>
</evidence>
<evidence type="ECO:0000305" key="6"/>
<evidence type="ECO:0000312" key="7">
    <source>
        <dbReference type="EMBL" id="KEH42737.1"/>
    </source>
</evidence>
<evidence type="ECO:0000312" key="8">
    <source>
        <dbReference type="EMBL" id="RHN80301.1"/>
    </source>
</evidence>
<gene>
    <name evidence="5" type="primary">ENOD2</name>
    <name evidence="7" type="ordered locus">MTR_1g074410</name>
    <name evidence="8" type="ordered locus">MtrunA17_Chr1g0186761</name>
</gene>
<feature type="signal peptide" evidence="2">
    <location>
        <begin position="1"/>
        <end status="unknown"/>
    </location>
</feature>
<feature type="chain" id="PRO_0000457861" description="Early nodule-specific protein 2">
    <location>
        <begin status="unknown"/>
        <end position="593"/>
    </location>
</feature>
<feature type="region of interest" description="Disordered" evidence="3">
    <location>
        <begin position="71"/>
        <end position="593"/>
    </location>
</feature>
<feature type="compositionally biased region" description="Pro residues" evidence="3">
    <location>
        <begin position="71"/>
        <end position="110"/>
    </location>
</feature>
<feature type="compositionally biased region" description="Basic and acidic residues" evidence="3">
    <location>
        <begin position="123"/>
        <end position="138"/>
    </location>
</feature>
<feature type="compositionally biased region" description="Basic and acidic residues" evidence="3">
    <location>
        <begin position="166"/>
        <end position="195"/>
    </location>
</feature>
<feature type="compositionally biased region" description="Pro residues" evidence="3">
    <location>
        <begin position="196"/>
        <end position="210"/>
    </location>
</feature>
<feature type="compositionally biased region" description="Basic and acidic residues" evidence="3">
    <location>
        <begin position="227"/>
        <end position="265"/>
    </location>
</feature>
<feature type="compositionally biased region" description="Basic and acidic residues" evidence="3">
    <location>
        <begin position="275"/>
        <end position="292"/>
    </location>
</feature>
<feature type="compositionally biased region" description="Pro residues" evidence="3">
    <location>
        <begin position="294"/>
        <end position="306"/>
    </location>
</feature>
<feature type="compositionally biased region" description="Basic and acidic residues" evidence="3">
    <location>
        <begin position="339"/>
        <end position="350"/>
    </location>
</feature>
<feature type="compositionally biased region" description="Basic and acidic residues" evidence="3">
    <location>
        <begin position="360"/>
        <end position="372"/>
    </location>
</feature>
<feature type="compositionally biased region" description="Basic and acidic residues" evidence="3">
    <location>
        <begin position="382"/>
        <end position="394"/>
    </location>
</feature>
<feature type="compositionally biased region" description="Basic and acidic residues" evidence="3">
    <location>
        <begin position="404"/>
        <end position="421"/>
    </location>
</feature>
<feature type="compositionally biased region" description="Pro residues" evidence="3">
    <location>
        <begin position="422"/>
        <end position="435"/>
    </location>
</feature>
<feature type="compositionally biased region" description="Basic and acidic residues" evidence="3">
    <location>
        <begin position="506"/>
        <end position="522"/>
    </location>
</feature>
<feature type="compositionally biased region" description="Pro residues" evidence="3">
    <location>
        <begin position="532"/>
        <end position="558"/>
    </location>
</feature>
<keyword id="KW-0536">Nodulation</keyword>
<keyword id="KW-1185">Reference proteome</keyword>
<keyword id="KW-0732">Signal</keyword>
<organism>
    <name type="scientific">Medicago truncatula</name>
    <name type="common">Barrel medic</name>
    <name type="synonym">Medicago tribuloides</name>
    <dbReference type="NCBI Taxonomy" id="3880"/>
    <lineage>
        <taxon>Eukaryota</taxon>
        <taxon>Viridiplantae</taxon>
        <taxon>Streptophyta</taxon>
        <taxon>Embryophyta</taxon>
        <taxon>Tracheophyta</taxon>
        <taxon>Spermatophyta</taxon>
        <taxon>Magnoliopsida</taxon>
        <taxon>eudicotyledons</taxon>
        <taxon>Gunneridae</taxon>
        <taxon>Pentapetalae</taxon>
        <taxon>rosids</taxon>
        <taxon>fabids</taxon>
        <taxon>Fabales</taxon>
        <taxon>Fabaceae</taxon>
        <taxon>Papilionoideae</taxon>
        <taxon>50 kb inversion clade</taxon>
        <taxon>NPAAA clade</taxon>
        <taxon>Hologalegina</taxon>
        <taxon>IRL clade</taxon>
        <taxon>Trifolieae</taxon>
        <taxon>Medicago</taxon>
    </lineage>
</organism>
<dbReference type="EMBL" id="CM001217">
    <property type="protein sequence ID" value="KEH42737.1"/>
    <property type="status" value="ALT_INIT"/>
    <property type="molecule type" value="Genomic_DNA"/>
</dbReference>
<dbReference type="EMBL" id="PSQE01000001">
    <property type="protein sequence ID" value="RHN80301.1"/>
    <property type="molecule type" value="Genomic_DNA"/>
</dbReference>
<dbReference type="RefSeq" id="XP_013468700.1">
    <property type="nucleotide sequence ID" value="XM_013613246.1"/>
</dbReference>
<dbReference type="EnsemblPlants" id="rna4207">
    <property type="protein sequence ID" value="RHN80301.1"/>
    <property type="gene ID" value="gene4207"/>
</dbReference>
<dbReference type="Gramene" id="rna4207">
    <property type="protein sequence ID" value="RHN80301.1"/>
    <property type="gene ID" value="gene4207"/>
</dbReference>
<dbReference type="KEGG" id="mtr:25484438"/>
<dbReference type="HOGENOM" id="CLU_488679_0_0_1"/>
<dbReference type="Proteomes" id="UP000002051">
    <property type="component" value="Chromosome 1"/>
</dbReference>
<dbReference type="Proteomes" id="UP000265566">
    <property type="component" value="Chromosome 1"/>
</dbReference>
<dbReference type="GO" id="GO:0009877">
    <property type="term" value="P:nodulation"/>
    <property type="evidence" value="ECO:0007669"/>
    <property type="project" value="UniProtKB-KW"/>
</dbReference>
<dbReference type="InterPro" id="IPR051308">
    <property type="entry name" value="Proline-rich_CW_protein"/>
</dbReference>
<dbReference type="PANTHER" id="PTHR34629">
    <property type="entry name" value="PROLINE-RICH EXTENSIN-LIKE PROTEIN EPR1"/>
    <property type="match status" value="1"/>
</dbReference>
<dbReference type="PANTHER" id="PTHR34629:SF1">
    <property type="entry name" value="PROLINE-RICH EXTENSIN-LIKE PROTEIN EPR1"/>
    <property type="match status" value="1"/>
</dbReference>
<dbReference type="PRINTS" id="PR01217">
    <property type="entry name" value="PRICHEXTENSN"/>
</dbReference>
<proteinExistence type="evidence at transcript level"/>
<comment type="function">
    <text evidence="1">Involved in early stages of root nodule development.</text>
</comment>
<comment type="induction">
    <text evidence="4">Accumulates in response to Sinorhizobium meliloti inoculation leading to nodulation.</text>
</comment>
<comment type="similarity">
    <text evidence="6">Belongs to the nodulin 75 family.</text>
</comment>
<comment type="sequence caution" evidence="6">
    <conflict type="erroneous initiation">
        <sequence resource="EMBL-CDS" id="KEH42737"/>
    </conflict>
    <text>Truncated N-terminus.</text>
</comment>
<sequence length="593" mass="69219">MKCQRIEDDFTLKFYVFLLINTCSSIPFLFITTRGMASMHSLAILLLGVVMLTTPVLAEYYKPPTYEPPIEKPPIYEPPPTEEPPPVYKPPIIHPPPNYKPPAHTPPIYHPPHEKPPPVYEPPYEKPPHEEPPREYQPPRENPSPEYEPPHHGKPPYENPPPEYKPPYEKPPPEYQPPHHEKPPPEYQPPHEKPPPEYTPPYEKPPPEYQPPHEKPPHESSPPEYQPPHEKPPHEHPPPEYQPPHEKPPHEHPPPEYQPPHEKPPHVHPPPEYQPPHEHPPPEYQPPHEKPPHVHPPPEYQPPYLKPPHEKSPYEPPPQEYQPPHEKPPQMKPPSEYQPPHEKPPHEHPPPEYQPPHVHPPPEHQPPHENPPHENPPPEYQPPHEKPPHYEHPPPENQPPHVHPPPEYKPPHEKPPHEHPPPEYQPPQENPPPEYKPPHEKPPHENTPPTHHPPHEKPPQEISLPEYQPPPPSTKYQPPHEKSPHENPPPEFAPPHKKLPPNYNPPRHEKPMPKYQPPHEKLPPVYKSPYVKTPPPQAYHPPPPIYHHPPFHPPPHVKPPVYETPLAKVPQMKKPTRYNTRPFGHYPPYKKNQ</sequence>
<protein>
    <recommendedName>
        <fullName evidence="5">Early nodule-specific protein 2</fullName>
    </recommendedName>
    <alternativeName>
        <fullName evidence="6">Early nodulin-75-like</fullName>
    </alternativeName>
</protein>
<accession>A0A396JU32</accession>
<accession>A0A072VLM0</accession>
<name>ENOD2_MEDTR</name>